<dbReference type="EMBL" id="U61146">
    <property type="protein sequence ID" value="AAC44878.1"/>
    <property type="molecule type" value="Genomic_DNA"/>
</dbReference>
<dbReference type="EMBL" id="CP000133">
    <property type="protein sequence ID" value="ABC90054.1"/>
    <property type="molecule type" value="Genomic_DNA"/>
</dbReference>
<dbReference type="RefSeq" id="WP_011424588.1">
    <property type="nucleotide sequence ID" value="NC_007761.1"/>
</dbReference>
<dbReference type="SMR" id="Q52741"/>
<dbReference type="KEGG" id="ret:RHE_CH01249"/>
<dbReference type="eggNOG" id="COG4957">
    <property type="taxonomic scope" value="Bacteria"/>
</dbReference>
<dbReference type="HOGENOM" id="CLU_106247_2_1_5"/>
<dbReference type="OrthoDB" id="9809693at2"/>
<dbReference type="Proteomes" id="UP000001936">
    <property type="component" value="Chromosome"/>
</dbReference>
<dbReference type="GO" id="GO:0003677">
    <property type="term" value="F:DNA binding"/>
    <property type="evidence" value="ECO:0007669"/>
    <property type="project" value="UniProtKB-KW"/>
</dbReference>
<dbReference type="GO" id="GO:0008270">
    <property type="term" value="F:zinc ion binding"/>
    <property type="evidence" value="ECO:0007669"/>
    <property type="project" value="UniProtKB-KW"/>
</dbReference>
<dbReference type="GO" id="GO:0006355">
    <property type="term" value="P:regulation of DNA-templated transcription"/>
    <property type="evidence" value="ECO:0007669"/>
    <property type="project" value="InterPro"/>
</dbReference>
<dbReference type="Gene3D" id="1.10.10.1550">
    <property type="entry name" value="ROS/MUCR transcriptional regulator protein"/>
    <property type="match status" value="1"/>
</dbReference>
<dbReference type="InterPro" id="IPR041920">
    <property type="entry name" value="ROS/MUCR_sf"/>
</dbReference>
<dbReference type="InterPro" id="IPR008807">
    <property type="entry name" value="ROS_MUCR"/>
</dbReference>
<dbReference type="Pfam" id="PF05443">
    <property type="entry name" value="ROS_MUCR"/>
    <property type="match status" value="1"/>
</dbReference>
<keyword id="KW-0238">DNA-binding</keyword>
<keyword id="KW-0479">Metal-binding</keyword>
<keyword id="KW-0536">Nodulation</keyword>
<keyword id="KW-1185">Reference proteome</keyword>
<keyword id="KW-0804">Transcription</keyword>
<keyword id="KW-0805">Transcription regulation</keyword>
<keyword id="KW-0862">Zinc</keyword>
<keyword id="KW-0863">Zinc-finger</keyword>
<evidence type="ECO:0000305" key="1"/>
<name>ROSR_RHIEC</name>
<protein>
    <recommendedName>
        <fullName>Transcriptional regulatory protein RosR</fullName>
    </recommendedName>
    <alternativeName>
        <fullName>Nodulation competitiveness determinant</fullName>
    </alternativeName>
</protein>
<gene>
    <name type="primary">rosR</name>
    <name type="ordered locus">RHE_CH01249</name>
</gene>
<reference key="1">
    <citation type="journal article" date="1997" name="Mol. Plant Microbe Interact.">
        <title>rosR, a determinant of nodulation competitiveness in Rhizobium etli.</title>
        <authorList>
            <person name="Bittinger M.A."/>
            <person name="Milner J.L."/>
            <person name="Saville B.J."/>
            <person name="Handelsman J."/>
        </authorList>
    </citation>
    <scope>NUCLEOTIDE SEQUENCE [GENOMIC DNA]</scope>
    <source>
        <strain>CE3</strain>
    </source>
</reference>
<reference key="2">
    <citation type="journal article" date="2006" name="Proc. Natl. Acad. Sci. U.S.A.">
        <title>The partitioned Rhizobium etli genome: genetic and metabolic redundancy in seven interacting replicons.</title>
        <authorList>
            <person name="Gonzalez V."/>
            <person name="Santamaria R.I."/>
            <person name="Bustos P."/>
            <person name="Hernandez-Gonzalez I."/>
            <person name="Medrano-Soto A."/>
            <person name="Moreno-Hagelsieb G."/>
            <person name="Janga S.C."/>
            <person name="Ramirez M.A."/>
            <person name="Jimenez-Jacinto V."/>
            <person name="Collado-Vides J."/>
            <person name="Davila G."/>
        </authorList>
    </citation>
    <scope>NUCLEOTIDE SEQUENCE [LARGE SCALE GENOMIC DNA]</scope>
    <source>
        <strain>ATCC 51251 / DSM 11541 / JCM 21823 / NBRC 15573 / CFN 42</strain>
    </source>
</reference>
<comment type="similarity">
    <text evidence="1">Belongs to the ros/MucR family.</text>
</comment>
<organism>
    <name type="scientific">Rhizobium etli (strain ATCC 51251 / DSM 11541 / JCM 21823 / NBRC 15573 / CFN 42)</name>
    <dbReference type="NCBI Taxonomy" id="347834"/>
    <lineage>
        <taxon>Bacteria</taxon>
        <taxon>Pseudomonadati</taxon>
        <taxon>Pseudomonadota</taxon>
        <taxon>Alphaproteobacteria</taxon>
        <taxon>Hyphomicrobiales</taxon>
        <taxon>Rhizobiaceae</taxon>
        <taxon>Rhizobium/Agrobacterium group</taxon>
        <taxon>Rhizobium</taxon>
    </lineage>
</organism>
<feature type="chain" id="PRO_0000168174" description="Transcriptional regulatory protein RosR">
    <location>
        <begin position="1"/>
        <end position="143"/>
    </location>
</feature>
<feature type="zinc finger region" description="C2H3-type">
    <location>
        <begin position="79"/>
        <end position="97"/>
    </location>
</feature>
<proteinExistence type="inferred from homology"/>
<accession>Q52741</accession>
<accession>Q2KAT2</accession>
<sequence>MTDMATGNAPELLVELTADIVAAYVSNHVVPVSDLANLISDVHSALSNTSVPQPAAAVVEKQKPAVSVRKSVQDEQITCLECGGNFKSLKRHLMTHHSLSPEEYREKWDLPTDYPMVAPAYAEARSRLAKEMGLGQRRKRGRG</sequence>